<protein>
    <recommendedName>
        <fullName evidence="1">Maturase K</fullName>
    </recommendedName>
    <alternativeName>
        <fullName evidence="1">Intron maturase</fullName>
    </alternativeName>
</protein>
<sequence>MEEYQIYLEIDGSCQENFLYPLSFQEYIYGLAYGHDLNRKVSILVENVDSDKKYSLLIVKRLITRMYQQNHLLLFANDSKKNLFLGYNKNFYSQIISDAFAVIVEIPFSRQFISSLEDAETIKSFNNLRSIHSIFSFFEDKFTYLNFVSDVRIPYPIHLEILVQTXXXXXXXXPFFHLLRLFLYEYSNWNTFITQKKRISTLSKSNPRFYIFLYNFYVCEHESIFLFLRKNSSHLRLNSFSLLFERIHFYAKLEHLVEVFAKDFSCTLAFFKDPMIHYVRYQGKSILASKNAPLLLNKWKYYLIYLWQCHFDVWSQEGTIRIKQLLSEHSFHFFWGGYISNVRLNFSVVRSQMLENSFPIEIGMKRLDTIVPIIPLIRSLAKAKFCNILGHPISKPVWTDSSDFDIIDRFLRICRNISHYYKGSSKKKGLYRIKYILRLSCIKTLARKHKSTVRAFLKRLDSEELLEEFLTEEEEILSLIFPRASSTLQSLYRDQIWYLDILFSHDLFNYE</sequence>
<dbReference type="EMBL" id="AF270863">
    <property type="protein sequence ID" value="AAG02046.1"/>
    <property type="molecule type" value="Genomic_DNA"/>
</dbReference>
<dbReference type="GO" id="GO:0009507">
    <property type="term" value="C:chloroplast"/>
    <property type="evidence" value="ECO:0007669"/>
    <property type="project" value="UniProtKB-SubCell"/>
</dbReference>
<dbReference type="GO" id="GO:0003723">
    <property type="term" value="F:RNA binding"/>
    <property type="evidence" value="ECO:0007669"/>
    <property type="project" value="UniProtKB-KW"/>
</dbReference>
<dbReference type="GO" id="GO:0006397">
    <property type="term" value="P:mRNA processing"/>
    <property type="evidence" value="ECO:0007669"/>
    <property type="project" value="UniProtKB-KW"/>
</dbReference>
<dbReference type="GO" id="GO:0008380">
    <property type="term" value="P:RNA splicing"/>
    <property type="evidence" value="ECO:0007669"/>
    <property type="project" value="UniProtKB-UniRule"/>
</dbReference>
<dbReference type="GO" id="GO:0008033">
    <property type="term" value="P:tRNA processing"/>
    <property type="evidence" value="ECO:0007669"/>
    <property type="project" value="UniProtKB-KW"/>
</dbReference>
<dbReference type="HAMAP" id="MF_01390">
    <property type="entry name" value="MatK"/>
    <property type="match status" value="1"/>
</dbReference>
<dbReference type="InterPro" id="IPR024937">
    <property type="entry name" value="Domain_X"/>
</dbReference>
<dbReference type="InterPro" id="IPR002866">
    <property type="entry name" value="Maturase_MatK"/>
</dbReference>
<dbReference type="InterPro" id="IPR024942">
    <property type="entry name" value="Maturase_MatK_N"/>
</dbReference>
<dbReference type="PANTHER" id="PTHR34811">
    <property type="entry name" value="MATURASE K"/>
    <property type="match status" value="1"/>
</dbReference>
<dbReference type="PANTHER" id="PTHR34811:SF1">
    <property type="entry name" value="MATURASE K"/>
    <property type="match status" value="1"/>
</dbReference>
<dbReference type="Pfam" id="PF01348">
    <property type="entry name" value="Intron_maturas2"/>
    <property type="match status" value="1"/>
</dbReference>
<dbReference type="Pfam" id="PF01824">
    <property type="entry name" value="MatK_N"/>
    <property type="match status" value="1"/>
</dbReference>
<comment type="function">
    <text evidence="1">Usually encoded in the trnK tRNA gene intron. Probably assists in splicing its own and other chloroplast group II introns.</text>
</comment>
<comment type="subcellular location">
    <subcellularLocation>
        <location>Plastid</location>
        <location>Chloroplast</location>
    </subcellularLocation>
</comment>
<comment type="similarity">
    <text evidence="1">Belongs to the intron maturase 2 family. MatK subfamily.</text>
</comment>
<evidence type="ECO:0000255" key="1">
    <source>
        <dbReference type="HAMAP-Rule" id="MF_01390"/>
    </source>
</evidence>
<organism>
    <name type="scientific">Adesmia lanata</name>
    <dbReference type="NCBI Taxonomy" id="104308"/>
    <lineage>
        <taxon>Eukaryota</taxon>
        <taxon>Viridiplantae</taxon>
        <taxon>Streptophyta</taxon>
        <taxon>Embryophyta</taxon>
        <taxon>Tracheophyta</taxon>
        <taxon>Spermatophyta</taxon>
        <taxon>Magnoliopsida</taxon>
        <taxon>eudicotyledons</taxon>
        <taxon>Gunneridae</taxon>
        <taxon>Pentapetalae</taxon>
        <taxon>rosids</taxon>
        <taxon>fabids</taxon>
        <taxon>Fabales</taxon>
        <taxon>Fabaceae</taxon>
        <taxon>Papilionoideae</taxon>
        <taxon>50 kb inversion clade</taxon>
        <taxon>dalbergioids sensu lato</taxon>
        <taxon>Dalbergieae</taxon>
        <taxon>Adesmia clade</taxon>
        <taxon>Adesmia</taxon>
    </lineage>
</organism>
<proteinExistence type="inferred from homology"/>
<keyword id="KW-0150">Chloroplast</keyword>
<keyword id="KW-0507">mRNA processing</keyword>
<keyword id="KW-0934">Plastid</keyword>
<keyword id="KW-0694">RNA-binding</keyword>
<keyword id="KW-0819">tRNA processing</keyword>
<accession>Q9GI85</accession>
<reference key="1">
    <citation type="journal article" date="2001" name="Am. J. Bot.">
        <title>The dalbergioid legumes (Fabaceae): delimitation of a pantropical monophyletic clade.</title>
        <authorList>
            <person name="Lavin M."/>
            <person name="Pennington R.T."/>
            <person name="Klitgaard B.B."/>
            <person name="Sprent J.I."/>
            <person name="de Lima H.C."/>
            <person name="Gasson P.E."/>
        </authorList>
    </citation>
    <scope>NUCLEOTIDE SEQUENCE [GENOMIC DNA]</scope>
</reference>
<feature type="chain" id="PRO_0000143212" description="Maturase K">
    <location>
        <begin position="1"/>
        <end position="511"/>
    </location>
</feature>
<gene>
    <name evidence="1" type="primary">matK</name>
</gene>
<name>MATK_ADELA</name>
<geneLocation type="chloroplast"/>